<keyword id="KW-0053">Apoptosis</keyword>
<keyword id="KW-0256">Endoplasmic reticulum</keyword>
<keyword id="KW-0472">Membrane</keyword>
<keyword id="KW-0812">Transmembrane</keyword>
<keyword id="KW-1133">Transmembrane helix</keyword>
<name>DAD1_HORVU</name>
<comment type="function">
    <text evidence="2">Subunit of the oligosaccharyl transferase (OST) complex that catalyzes the initial transfer of a defined glycan (Glc(3)Man(9)GlcNAc(2) in eukaryotes) from the lipid carrier dolichol-pyrophosphate to an asparagine residue within an Asn-X-Ser/Thr consensus motif in nascent polypeptide chains, the first step in protein N-glycosylation. N-glycosylation occurs cotranslationally and the complex associates with the Sec61 complex at the channel-forming translocon complex that mediates protein translocation across the endoplasmic reticulum (ER). All subunits are required for a maximal enzyme activity.</text>
</comment>
<comment type="pathway">
    <text>Protein modification; protein glycosylation.</text>
</comment>
<comment type="subunit">
    <text evidence="2">Component of the oligosaccharyltransferase (OST) complex.</text>
</comment>
<comment type="subcellular location">
    <subcellularLocation>
        <location evidence="1">Endoplasmic reticulum membrane</location>
        <topology evidence="1">Multi-pass membrane protein</topology>
    </subcellularLocation>
</comment>
<comment type="similarity">
    <text evidence="4">Belongs to the DAD/OST2 family.</text>
</comment>
<protein>
    <recommendedName>
        <fullName>Dolichyl-diphosphooligosaccharide--protein glycosyltransferase subunit DAD1</fullName>
        <shortName>Oligosaccharyl transferase subunit DAD1</shortName>
    </recommendedName>
    <alternativeName>
        <fullName>Defender against cell death 1</fullName>
        <shortName>DAD-1</shortName>
    </alternativeName>
</protein>
<organism>
    <name type="scientific">Hordeum vulgare</name>
    <name type="common">Barley</name>
    <dbReference type="NCBI Taxonomy" id="4513"/>
    <lineage>
        <taxon>Eukaryota</taxon>
        <taxon>Viridiplantae</taxon>
        <taxon>Streptophyta</taxon>
        <taxon>Embryophyta</taxon>
        <taxon>Tracheophyta</taxon>
        <taxon>Spermatophyta</taxon>
        <taxon>Magnoliopsida</taxon>
        <taxon>Liliopsida</taxon>
        <taxon>Poales</taxon>
        <taxon>Poaceae</taxon>
        <taxon>BOP clade</taxon>
        <taxon>Pooideae</taxon>
        <taxon>Triticodae</taxon>
        <taxon>Triticeae</taxon>
        <taxon>Hordeinae</taxon>
        <taxon>Hordeum</taxon>
    </lineage>
</organism>
<gene>
    <name type="primary">DAD1</name>
</gene>
<feature type="chain" id="PRO_0000124023" description="Dolichyl-diphosphooligosaccharide--protein glycosyltransferase subunit DAD1">
    <location>
        <begin position="1"/>
        <end position="114"/>
    </location>
</feature>
<feature type="topological domain" description="Cytoplasmic" evidence="3">
    <location>
        <begin position="1"/>
        <end position="30"/>
    </location>
</feature>
<feature type="transmembrane region" description="Helical" evidence="3">
    <location>
        <begin position="31"/>
        <end position="51"/>
    </location>
</feature>
<feature type="topological domain" description="Lumenal" evidence="3">
    <location>
        <position position="52"/>
    </location>
</feature>
<feature type="transmembrane region" description="Helical" evidence="3">
    <location>
        <begin position="53"/>
        <end position="73"/>
    </location>
</feature>
<feature type="topological domain" description="Cytoplasmic" evidence="3">
    <location>
        <begin position="74"/>
        <end position="93"/>
    </location>
</feature>
<feature type="transmembrane region" description="Helical" evidence="3">
    <location>
        <begin position="94"/>
        <end position="114"/>
    </location>
</feature>
<proteinExistence type="inferred from homology"/>
<accession>Q9SME9</accession>
<dbReference type="EMBL" id="AJ133276">
    <property type="protein sequence ID" value="CAB56223.1"/>
    <property type="molecule type" value="mRNA"/>
</dbReference>
<dbReference type="SMR" id="Q9SME9"/>
<dbReference type="UniPathway" id="UPA00378"/>
<dbReference type="ExpressionAtlas" id="Q9SME9">
    <property type="expression patterns" value="baseline and differential"/>
</dbReference>
<dbReference type="GO" id="GO:0008250">
    <property type="term" value="C:oligosaccharyltransferase complex"/>
    <property type="evidence" value="ECO:0007669"/>
    <property type="project" value="InterPro"/>
</dbReference>
<dbReference type="GO" id="GO:0006487">
    <property type="term" value="P:protein N-linked glycosylation"/>
    <property type="evidence" value="ECO:0007669"/>
    <property type="project" value="TreeGrafter"/>
</dbReference>
<dbReference type="InterPro" id="IPR003038">
    <property type="entry name" value="DAD/Ost2"/>
</dbReference>
<dbReference type="PANTHER" id="PTHR10705">
    <property type="entry name" value="DOLICHYL-DIPHOSPHOOLIGOSACCHARIDE--PROTEIN GLYCOSYLTRANSFERASE SUBUNIT DAD1"/>
    <property type="match status" value="1"/>
</dbReference>
<dbReference type="PANTHER" id="PTHR10705:SF0">
    <property type="entry name" value="DOLICHYL-DIPHOSPHOOLIGOSACCHARIDE--PROTEIN GLYCOSYLTRANSFERASE SUBUNIT DAD1"/>
    <property type="match status" value="1"/>
</dbReference>
<dbReference type="Pfam" id="PF02109">
    <property type="entry name" value="DAD"/>
    <property type="match status" value="1"/>
</dbReference>
<dbReference type="PIRSF" id="PIRSF005588">
    <property type="entry name" value="DAD"/>
    <property type="match status" value="1"/>
</dbReference>
<reference key="1">
    <citation type="journal article" date="2000" name="Mech. Dev.">
        <title>Glycosylation of phytepsin and expression of dad1, dad2 and ost1 during onset of cell death in germinating barley scutella.</title>
        <authorList>
            <person name="Lindholm P."/>
            <person name="Kuittinen T."/>
            <person name="Sorri O."/>
            <person name="Guo D."/>
            <person name="Merits A."/>
            <person name="Tormakangas K."/>
            <person name="Runeberg-Roos P."/>
        </authorList>
    </citation>
    <scope>NUCLEOTIDE SEQUENCE [MRNA]</scope>
</reference>
<evidence type="ECO:0000250" key="1"/>
<evidence type="ECO:0000250" key="2">
    <source>
        <dbReference type="UniProtKB" id="P46964"/>
    </source>
</evidence>
<evidence type="ECO:0000255" key="3"/>
<evidence type="ECO:0000305" key="4"/>
<sequence>MPKAAGDAKLLIQSLNKAYAATPTNLKIIDLYVVFAVVTALLQVVYMGIVGSFPFNSFLSGVLSCIGTAVLAVCHRIQVNKDNKEFKDLAPERAFADFVLCSLVLHLVIMNFLG</sequence>